<evidence type="ECO:0000250" key="1"/>
<evidence type="ECO:0000255" key="2">
    <source>
        <dbReference type="HAMAP-Rule" id="MF_03000"/>
    </source>
</evidence>
<evidence type="ECO:0000255" key="3">
    <source>
        <dbReference type="PROSITE-ProRule" id="PRU01185"/>
    </source>
</evidence>
<evidence type="ECO:0000256" key="4">
    <source>
        <dbReference type="SAM" id="MobiDB-lite"/>
    </source>
</evidence>
<evidence type="ECO:0000269" key="5">
    <source>
    </source>
</evidence>
<evidence type="ECO:0000269" key="6">
    <source>
    </source>
</evidence>
<evidence type="ECO:0000269" key="7">
    <source>
    </source>
</evidence>
<evidence type="ECO:0000269" key="8">
    <source>
    </source>
</evidence>
<evidence type="ECO:0000269" key="9">
    <source>
    </source>
</evidence>
<evidence type="ECO:0000269" key="10">
    <source>
    </source>
</evidence>
<evidence type="ECO:0000269" key="11">
    <source>
    </source>
</evidence>
<evidence type="ECO:0000269" key="12">
    <source>
    </source>
</evidence>
<evidence type="ECO:0000269" key="13">
    <source>
    </source>
</evidence>
<evidence type="ECO:0000269" key="14">
    <source>
    </source>
</evidence>
<evidence type="ECO:0000269" key="15">
    <source>
    </source>
</evidence>
<evidence type="ECO:0000269" key="16">
    <source>
    </source>
</evidence>
<evidence type="ECO:0000269" key="17">
    <source>
    </source>
</evidence>
<evidence type="ECO:0000269" key="18">
    <source>
    </source>
</evidence>
<evidence type="ECO:0000269" key="19">
    <source>
    </source>
</evidence>
<evidence type="ECO:0000269" key="20">
    <source ref="7"/>
</evidence>
<evidence type="ECO:0000303" key="21">
    <source>
    </source>
</evidence>
<evidence type="ECO:0000305" key="22"/>
<evidence type="ECO:0007744" key="23">
    <source>
    </source>
</evidence>
<evidence type="ECO:0007744" key="24">
    <source>
    </source>
</evidence>
<evidence type="ECO:0007744" key="25">
    <source>
    </source>
</evidence>
<evidence type="ECO:0007744" key="26">
    <source>
    </source>
</evidence>
<evidence type="ECO:0007744" key="27">
    <source>
    </source>
</evidence>
<evidence type="ECO:0007829" key="28">
    <source>
        <dbReference type="PDB" id="6YBD"/>
    </source>
</evidence>
<evidence type="ECO:0007829" key="29">
    <source>
        <dbReference type="PDB" id="8RG0"/>
    </source>
</evidence>
<gene>
    <name evidence="2" type="primary">EIF3A</name>
    <name evidence="2" type="synonym">EIF3S10</name>
    <name type="synonym">KIAA0139</name>
</gene>
<sequence length="1382" mass="166569">MPAYFQRPENALKRANEFLEVGKKQPALDVLYDVMKSKKHRTWQKIHEPIMLKYLELCVDLRKSHLAKEGLYQYKNICQQVNIKSLEDVVRAYLKMAEEKTEAAKEESQQMVLDIEDLDNIQTPESVLLSAVSGEDTQDRTDRLLLTPWVKFLWESYRQCLDLLRNNSRVERLYHDIAQQAFKFCLQYTRKAEFRKLCDNLRMHLSQIQRHHNQSTAINLNNPESQSMHLETRLVQLDSAISMELWQEAFKAVEDIHGLFSLSKKPPKPQLMANYYNKVSTVFWKSGNALFHASTLHRLYHLSREMRKNLTQDEMQRMSTRVLLATLSIPITPERTDIARLLDMDGIIVEKQRRLATLLGLQAPPTRIGLINDMVRFNVLQYVVPEVKDLYNWLEVEFNPLKLCERVTKVLNWVREQPEKEPELQQYVPQLQNNTILRLLQQVSQIYQSIEFSRLTSLVPFVDAFQLERAIVDAARHCDLQVRIDHTSRTLSFGSDLNYATREDAPIGPHLQSMPSEQIRNQLTAMSSVLAKALEVIKPAHILQEKEEQHQLAVTAYLKNSRKEHQRILARRQTIEERKERLESLNIQREKEELEQREAELQKVRKAEEERLRQEAKEREKERILQEHEQIKKKTVRERLEQIKKTELGAKAFKDIDIEDLEELDPDFIMAKQVEQLEKEKKELQERLKNQEKKIDYFERAKRLEEIPLIKSAYEEQRIKDMDLWEQQEEERITTMQLEREKALEHKNRMSRMLEDRDLFVMRLKAARQSVYEEKLKQFEERLAEERHNRLEERKRQRKEERRITYYREKEEEEQRRAEEQMLKEREERERAERAKREEELREYQERVKKLEEVERKKRQRELEIEERERRREEERRLGDSSLSRKDSRWGDRDSEGTWRKGPEADSEWRRGPPEKEWRRGEGRDEDRSHRRDEERPRRLGDDEDREPSLRPDDDRVPRRGMDDDRGPRRGPEEDRFSRRGADDDRPSWRNTDDDRPPRRIADEDRGNWRHADDDRPPRRGLDEDRGSWRTADEDRGPRRGMDDDRGPRRGGADDERSSWRNADDDRGPRRGLDDDRGPRRGMDDDRGPRRGMDDDRGPRRGMDDDRGPRRGLDDDRGPWRNADDDRIPRRGAEDDRGPWRNMDDDRLSRRADDDRFPRRGDDSRPGPWRPLVKPGGWREKEKAREESWGPPRESRPSEEREWDREKERDRDNQDREENDKDPERERDRERDVDREDRFRRPRDEGGWRRGPAEESSSWRDSSRRDDRDRDDRRRERDDRRDLRERRDLRDDRDRRGPPLRSEREEVSSWRRADDRKDDRVEERDPPRRVPPPALSRDRERDRDREREGEKEKASWRAEKDRESLRRTKNETDEDGWTTVRR</sequence>
<comment type="function">
    <text evidence="2 5 12 17 18">RNA-binding component of the eukaryotic translation initiation factor 3 (eIF-3) complex, which is required for several steps in the initiation of protein synthesis (PubMed:17581632, PubMed:25849773). The eIF-3 complex associates with the 40S ribosome and facilitates the recruitment of eIF-1, eIF-1A, eIF-2:GTP:methionyl-tRNAi and eIF-5 to form the 43S pre-initiation complex (43S PIC). The eIF-3 complex stimulates mRNA recruitment to the 43S PIC and scanning of the mRNA for AUG recognition. The eIF-3 complex is also required for disassembly and recycling of post-termination ribosomal complexes and subsequently prevents premature joining of the 40S and 60S ribosomal subunits prior to initiation (PubMed:11169732, PubMed:17581632). The eIF-3 complex specifically targets and initiates translation of a subset of mRNAs involved in cell proliferation, including cell cycling, differentiation and apoptosis, and uses different modes of RNA stem-loop binding to exert either translational activation or repression (PubMed:25849773, PubMed:27462815).</text>
</comment>
<comment type="function">
    <text evidence="15 16">(Microbial infection) Essential for the initiation of translation on type-1 viral ribosomal entry sites (IRESs), like for HCV, PV, EV71 or BEV translation (PubMed:23766293, PubMed:24357634).</text>
</comment>
<comment type="function">
    <text evidence="13">(Microbial infection) In case of FCV infection, plays a role in the ribosomal termination-reinitiation event leading to the translation of VP2 (PubMed:18056426).</text>
</comment>
<comment type="subunit">
    <text evidence="1 5 6 7 9 10 11 14 17">Interacts with EIF4G1 (By similarity). Component of the eukaryotic translation initiation factor 3 (eIF-3) complex, which is composed of 13 subunits: EIF3A, EIF3B, EIF3C, EIF3D, EIF3E, EIF3F, EIF3G, EIF3H, EIF3I, EIF3J, EIF3K, EIF3L and EIF3M. The eIF-3 complex appears to include 3 stable modules: module A is composed of EIF3A, EIF3B, EIF3G and EIF3I; module B is composed of EIF3F, EIF3H, and EIF3M; and module C is composed of EIF3C, EIF3D, EIF3E, EIF3L and EIF3K. EIF3C of module C binds EIF3B of module A and EIF3H of module B, thereby linking the three modules. EIF3J is a labile subunit that binds to the eIF-3 complex via EIF3B. The eIF-3 complex interacts with RPS6KB1 under conditions of nutrient depletion. Mitogenic stimulation leads to binding and activation of a complex composed of MTOR and RPTOR, leading to phosphorylation and release of RPS6KB1 and binding of EIF4B to eIF-3. Also interacts with KRT7 and PIWIL2.</text>
</comment>
<comment type="interaction">
    <interactant intactId="EBI-366617">
        <id>Q14152</id>
    </interactant>
    <interactant intactId="EBI-726200">
        <id>P41567</id>
        <label>EIF1</label>
    </interactant>
    <organismsDiffer>false</organismsDiffer>
    <experiments>2</experiments>
</comment>
<comment type="interaction">
    <interactant intactId="EBI-366617">
        <id>Q14152</id>
    </interactant>
    <interactant intactId="EBI-1045377">
        <id>P47813</id>
        <label>EIF1AX</label>
    </interactant>
    <organismsDiffer>false</organismsDiffer>
    <experiments>2</experiments>
</comment>
<comment type="interaction">
    <interactant intactId="EBI-366617">
        <id>Q14152</id>
    </interactant>
    <interactant intactId="EBI-366696">
        <id>P55884</id>
        <label>EIF3B</label>
    </interactant>
    <organismsDiffer>false</organismsDiffer>
    <experiments>10</experiments>
</comment>
<comment type="interaction">
    <interactant intactId="EBI-366617">
        <id>Q14152</id>
    </interactant>
    <interactant intactId="EBI-353741">
        <id>Q99613</id>
        <label>EIF3C</label>
    </interactant>
    <organismsDiffer>false</organismsDiffer>
    <experiments>16</experiments>
</comment>
<comment type="interaction">
    <interactant intactId="EBI-366617">
        <id>Q14152</id>
    </interactant>
    <interactant intactId="EBI-347740">
        <id>P60228</id>
        <label>EIF3E</label>
    </interactant>
    <organismsDiffer>false</organismsDiffer>
    <experiments>18</experiments>
</comment>
<comment type="interaction">
    <interactant intactId="EBI-366617">
        <id>Q14152</id>
    </interactant>
    <interactant intactId="EBI-297833">
        <id>P08729</id>
        <label>KRT7</label>
    </interactant>
    <organismsDiffer>false</organismsDiffer>
    <experiments>3</experiments>
</comment>
<comment type="interaction">
    <interactant intactId="EBI-366617">
        <id>Q14152</id>
    </interactant>
    <interactant intactId="EBI-307352">
        <id>Q04864</id>
        <label>REL</label>
    </interactant>
    <organismsDiffer>false</organismsDiffer>
    <experiments>3</experiments>
</comment>
<comment type="interaction">
    <interactant intactId="EBI-366617">
        <id>Q14152</id>
    </interactant>
    <interactant intactId="EBI-373492">
        <id>Q92900-2</id>
        <label>UPF1</label>
    </interactant>
    <organismsDiffer>false</organismsDiffer>
    <experiments>5</experiments>
</comment>
<comment type="interaction">
    <interactant intactId="EBI-366617">
        <id>Q14152</id>
    </interactant>
    <interactant intactId="EBI-1634316">
        <id>Q9DCH4</id>
        <label>Eif3f</label>
    </interactant>
    <organismsDiffer>true</organismsDiffer>
    <experiments>4</experiments>
</comment>
<comment type="interaction">
    <interactant intactId="EBI-366617">
        <id>Q14152</id>
    </interactant>
    <interactant intactId="EBI-6248094">
        <id>Q9Q2G4</id>
        <label>ORF</label>
    </interactant>
    <organismsDiffer>true</organismsDiffer>
    <experiments>5</experiments>
</comment>
<comment type="subcellular location">
    <subcellularLocation>
        <location evidence="2 19">Cytoplasm</location>
    </subcellularLocation>
</comment>
<comment type="alternative products">
    <event type="alternative splicing"/>
    <isoform>
        <id>Q14152-1</id>
        <name>1</name>
        <sequence type="displayed"/>
    </isoform>
    <isoform>
        <id>Q14152-2</id>
        <name>2</name>
        <sequence type="described" ref="VSP_055471"/>
    </isoform>
</comment>
<comment type="PTM">
    <text evidence="2 10">Phosphorylated. Phosphorylation is enhanced upon serum stimulation.</text>
</comment>
<comment type="mass spectrometry" mass="166758.3" method="Unknown" evidence="10"/>
<comment type="similarity">
    <text evidence="2">Belongs to the eIF-3 subunit A family.</text>
</comment>
<comment type="sequence caution" evidence="22">
    <conflict type="erroneous initiation">
        <sequence resource="EMBL-CDS" id="BAA09488"/>
    </conflict>
</comment>
<comment type="online information" name="Atlas of Genetics and Cytogenetics in Oncology and Haematology">
    <link uri="https://atlasgeneticsoncology.org/gene/40425/EIF3A"/>
</comment>
<accession>Q14152</accession>
<accession>B1AMV5</accession>
<accession>B4DYS1</accession>
<accession>F5H335</accession>
<accession>O00653</accession>
<accession>Q15778</accession>
<protein>
    <recommendedName>
        <fullName evidence="2">Eukaryotic translation initiation factor 3 subunit A</fullName>
        <shortName evidence="2">eIF3a</shortName>
    </recommendedName>
    <alternativeName>
        <fullName evidence="2">Eukaryotic translation initiation factor 3 subunit 10</fullName>
    </alternativeName>
    <alternativeName>
        <fullName evidence="2">eIF-3-theta</fullName>
    </alternativeName>
    <alternativeName>
        <fullName>eIF3 p167</fullName>
    </alternativeName>
    <alternativeName>
        <fullName>eIF3 p180</fullName>
    </alternativeName>
    <alternativeName>
        <fullName>eIF3 p185</fullName>
    </alternativeName>
</protein>
<feature type="initiator methionine" description="Removed" evidence="2 10 20">
    <location>
        <position position="1"/>
    </location>
</feature>
<feature type="chain" id="PRO_0000123537" description="Eukaryotic translation initiation factor 3 subunit A">
    <location>
        <begin position="2"/>
        <end position="1382"/>
    </location>
</feature>
<feature type="domain" description="PCI" evidence="3">
    <location>
        <begin position="315"/>
        <end position="498"/>
    </location>
</feature>
<feature type="repeat" description="1">
    <location>
        <begin position="925"/>
        <end position="934"/>
    </location>
</feature>
<feature type="repeat" description="2; truncated">
    <location>
        <begin position="935"/>
        <end position="942"/>
    </location>
</feature>
<feature type="repeat" description="3">
    <location>
        <begin position="943"/>
        <end position="952"/>
    </location>
</feature>
<feature type="repeat" description="4">
    <location>
        <begin position="953"/>
        <end position="962"/>
    </location>
</feature>
<feature type="repeat" description="5">
    <location>
        <begin position="963"/>
        <end position="972"/>
    </location>
</feature>
<feature type="repeat" description="6">
    <location>
        <begin position="973"/>
        <end position="982"/>
    </location>
</feature>
<feature type="repeat" description="7">
    <location>
        <begin position="983"/>
        <end position="992"/>
    </location>
</feature>
<feature type="repeat" description="8">
    <location>
        <begin position="993"/>
        <end position="1002"/>
    </location>
</feature>
<feature type="repeat" description="9">
    <location>
        <begin position="1003"/>
        <end position="1012"/>
    </location>
</feature>
<feature type="repeat" description="10">
    <location>
        <begin position="1013"/>
        <end position="1022"/>
    </location>
</feature>
<feature type="repeat" description="11">
    <location>
        <begin position="1023"/>
        <end position="1032"/>
    </location>
</feature>
<feature type="repeat" description="12">
    <location>
        <begin position="1033"/>
        <end position="1042"/>
    </location>
</feature>
<feature type="repeat" description="13">
    <location>
        <begin position="1043"/>
        <end position="1052"/>
    </location>
</feature>
<feature type="repeat" description="14">
    <location>
        <begin position="1054"/>
        <end position="1063"/>
    </location>
</feature>
<feature type="repeat" description="15">
    <location>
        <begin position="1064"/>
        <end position="1073"/>
    </location>
</feature>
<feature type="repeat" description="16">
    <location>
        <begin position="1074"/>
        <end position="1083"/>
    </location>
</feature>
<feature type="repeat" description="17">
    <location>
        <begin position="1084"/>
        <end position="1093"/>
    </location>
</feature>
<feature type="repeat" description="18">
    <location>
        <begin position="1094"/>
        <end position="1103"/>
    </location>
</feature>
<feature type="repeat" description="19">
    <location>
        <begin position="1104"/>
        <end position="1113"/>
    </location>
</feature>
<feature type="repeat" description="20">
    <location>
        <begin position="1114"/>
        <end position="1123"/>
    </location>
</feature>
<feature type="repeat" description="21">
    <location>
        <begin position="1124"/>
        <end position="1133"/>
    </location>
</feature>
<feature type="repeat" description="22">
    <location>
        <begin position="1134"/>
        <end position="1143"/>
    </location>
</feature>
<feature type="repeat" description="23; truncated">
    <location>
        <begin position="1144"/>
        <end position="1152"/>
    </location>
</feature>
<feature type="repeat" description="24">
    <location>
        <begin position="1153"/>
        <end position="1162"/>
    </location>
</feature>
<feature type="repeat" description="25; approximate">
    <location>
        <begin position="1163"/>
        <end position="1172"/>
    </location>
</feature>
<feature type="region of interest" description="Interaction with EIF3B">
    <location>
        <begin position="664"/>
        <end position="835"/>
    </location>
</feature>
<feature type="region of interest" description="Disordered" evidence="4">
    <location>
        <begin position="810"/>
        <end position="844"/>
    </location>
</feature>
<feature type="region of interest" description="Disordered" evidence="4">
    <location>
        <begin position="866"/>
        <end position="1382"/>
    </location>
</feature>
<feature type="region of interest" description="25 X 10 AA approximate tandem repeats of [DE]-[DE]-[DE]-R-[SEVGFPILV]-[HPSN]-[RSW]-[RL]-[DRGTIHN]-[EPMANLGDT]">
    <location>
        <begin position="925"/>
        <end position="1172"/>
    </location>
</feature>
<feature type="coiled-coil region" evidence="2">
    <location>
        <begin position="82"/>
        <end position="120"/>
    </location>
</feature>
<feature type="compositionally biased region" description="Basic and acidic residues" evidence="4">
    <location>
        <begin position="866"/>
        <end position="1165"/>
    </location>
</feature>
<feature type="compositionally biased region" description="Basic and acidic residues" evidence="4">
    <location>
        <begin position="1177"/>
        <end position="1328"/>
    </location>
</feature>
<feature type="compositionally biased region" description="Basic and acidic residues" evidence="4">
    <location>
        <begin position="1336"/>
        <end position="1371"/>
    </location>
</feature>
<feature type="modified residue" description="N6-acetyllysine" evidence="23">
    <location>
        <position position="68"/>
    </location>
</feature>
<feature type="modified residue" description="Phosphoserine" evidence="24 26">
    <location>
        <position position="492"/>
    </location>
</feature>
<feature type="modified residue" description="Phosphoserine" evidence="26">
    <location>
        <position position="584"/>
    </location>
</feature>
<feature type="modified residue" description="Phosphoserine" evidence="2 10 26">
    <location>
        <position position="881"/>
    </location>
</feature>
<feature type="modified residue" description="Phosphoserine" evidence="25 26 27">
    <location>
        <position position="882"/>
    </location>
</feature>
<feature type="modified residue" description="Phosphoserine" evidence="26">
    <location>
        <position position="895"/>
    </location>
</feature>
<feature type="modified residue" description="Phosphoserine" evidence="26">
    <location>
        <position position="949"/>
    </location>
</feature>
<feature type="modified residue" description="Phosphoserine" evidence="26">
    <location>
        <position position="1028"/>
    </location>
</feature>
<feature type="modified residue" description="Phosphoserine" evidence="26">
    <location>
        <position position="1188"/>
    </location>
</feature>
<feature type="modified residue" description="Phosphoserine" evidence="2 10 26">
    <location>
        <position position="1198"/>
    </location>
</feature>
<feature type="modified residue" description="Phosphoserine" evidence="26">
    <location>
        <position position="1262"/>
    </location>
</feature>
<feature type="modified residue" description="Phosphoserine" evidence="2 10 26">
    <location>
        <position position="1336"/>
    </location>
</feature>
<feature type="modified residue" description="Phosphoserine" evidence="2 10">
    <location>
        <position position="1364"/>
    </location>
</feature>
<feature type="splice variant" id="VSP_055471" description="In isoform 2." evidence="21">
    <location>
        <begin position="1"/>
        <end position="34"/>
    </location>
</feature>
<feature type="sequence variant" id="VAR_024438" description="In dbSNP:rs967185." evidence="8">
    <original>E</original>
    <variation>K</variation>
    <location>
        <position position="386"/>
    </location>
</feature>
<feature type="sequence variant" id="VAR_048921" description="In dbSNP:rs431898.">
    <original>K</original>
    <variation>N</variation>
    <location>
        <position position="694"/>
    </location>
</feature>
<feature type="sequence variant" id="VAR_048922" description="In dbSNP:rs532138.">
    <original>D</original>
    <variation>E</variation>
    <location>
        <position position="993"/>
    </location>
</feature>
<feature type="sequence conflict" description="In Ref. 4; BAG63833." evidence="22" ref="4">
    <original>R</original>
    <variation>G</variation>
    <location>
        <position position="520"/>
    </location>
</feature>
<feature type="sequence conflict" description="In Ref. 4; BAG63833." evidence="22" ref="4">
    <original>D</original>
    <variation>G</variation>
    <location>
        <position position="983"/>
    </location>
</feature>
<feature type="sequence conflict" description="In Ref. 4; BAG63833." evidence="22" ref="4">
    <original>D</original>
    <variation>G</variation>
    <location>
        <position position="1272"/>
    </location>
</feature>
<feature type="helix" evidence="28">
    <location>
        <begin position="9"/>
        <end position="15"/>
    </location>
</feature>
<feature type="turn" evidence="28">
    <location>
        <begin position="16"/>
        <end position="22"/>
    </location>
</feature>
<feature type="helix" evidence="28">
    <location>
        <begin position="24"/>
        <end position="35"/>
    </location>
</feature>
<feature type="turn" evidence="28">
    <location>
        <begin position="44"/>
        <end position="46"/>
    </location>
</feature>
<feature type="helix" evidence="28">
    <location>
        <begin position="47"/>
        <end position="60"/>
    </location>
</feature>
<feature type="helix" evidence="28">
    <location>
        <begin position="65"/>
        <end position="76"/>
    </location>
</feature>
<feature type="helix" evidence="28">
    <location>
        <begin position="84"/>
        <end position="102"/>
    </location>
</feature>
<feature type="turn" evidence="28">
    <location>
        <begin position="103"/>
        <end position="105"/>
    </location>
</feature>
<feature type="helix" evidence="28">
    <location>
        <begin position="106"/>
        <end position="115"/>
    </location>
</feature>
<feature type="turn" evidence="28">
    <location>
        <begin position="124"/>
        <end position="128"/>
    </location>
</feature>
<feature type="helix" evidence="28">
    <location>
        <begin position="129"/>
        <end position="131"/>
    </location>
</feature>
<feature type="helix" evidence="28">
    <location>
        <begin position="140"/>
        <end position="143"/>
    </location>
</feature>
<feature type="helix" evidence="28">
    <location>
        <begin position="147"/>
        <end position="162"/>
    </location>
</feature>
<feature type="turn" evidence="29">
    <location>
        <begin position="168"/>
        <end position="170"/>
    </location>
</feature>
<feature type="helix" evidence="28">
    <location>
        <begin position="171"/>
        <end position="187"/>
    </location>
</feature>
<feature type="helix" evidence="28">
    <location>
        <begin position="192"/>
        <end position="203"/>
    </location>
</feature>
<feature type="turn" evidence="28">
    <location>
        <begin position="204"/>
        <end position="207"/>
    </location>
</feature>
<feature type="helix" evidence="28">
    <location>
        <begin position="208"/>
        <end position="210"/>
    </location>
</feature>
<feature type="turn" evidence="28">
    <location>
        <begin position="211"/>
        <end position="214"/>
    </location>
</feature>
<feature type="helix" evidence="28">
    <location>
        <begin position="223"/>
        <end position="241"/>
    </location>
</feature>
<feature type="turn" evidence="28">
    <location>
        <begin position="242"/>
        <end position="244"/>
    </location>
</feature>
<feature type="helix" evidence="28">
    <location>
        <begin position="248"/>
        <end position="259"/>
    </location>
</feature>
<feature type="turn" evidence="28">
    <location>
        <begin position="269"/>
        <end position="271"/>
    </location>
</feature>
<feature type="helix" evidence="28">
    <location>
        <begin position="272"/>
        <end position="285"/>
    </location>
</feature>
<feature type="helix" evidence="28">
    <location>
        <begin position="289"/>
        <end position="306"/>
    </location>
</feature>
<feature type="helix" evidence="28">
    <location>
        <begin position="312"/>
        <end position="326"/>
    </location>
</feature>
<feature type="strand" evidence="28">
    <location>
        <begin position="333"/>
        <end position="336"/>
    </location>
</feature>
<feature type="helix" evidence="28">
    <location>
        <begin position="339"/>
        <end position="344"/>
    </location>
</feature>
<feature type="helix" evidence="28">
    <location>
        <begin position="352"/>
        <end position="358"/>
    </location>
</feature>
<feature type="turn" evidence="28">
    <location>
        <begin position="367"/>
        <end position="370"/>
    </location>
</feature>
<feature type="helix" evidence="28">
    <location>
        <begin position="371"/>
        <end position="375"/>
    </location>
</feature>
<feature type="turn" evidence="29">
    <location>
        <begin position="376"/>
        <end position="378"/>
    </location>
</feature>
<feature type="helix" evidence="28">
    <location>
        <begin position="379"/>
        <end position="381"/>
    </location>
</feature>
<feature type="helix" evidence="29">
    <location>
        <begin position="385"/>
        <end position="388"/>
    </location>
</feature>
<feature type="helix" evidence="28">
    <location>
        <begin position="390"/>
        <end position="395"/>
    </location>
</feature>
<feature type="helix" evidence="28">
    <location>
        <begin position="400"/>
        <end position="402"/>
    </location>
</feature>
<feature type="helix" evidence="28">
    <location>
        <begin position="403"/>
        <end position="415"/>
    </location>
</feature>
<feature type="strand" evidence="28">
    <location>
        <begin position="416"/>
        <end position="421"/>
    </location>
</feature>
<feature type="helix" evidence="28">
    <location>
        <begin position="422"/>
        <end position="427"/>
    </location>
</feature>
<feature type="helix" evidence="28">
    <location>
        <begin position="429"/>
        <end position="443"/>
    </location>
</feature>
<feature type="turn" evidence="28">
    <location>
        <begin position="444"/>
        <end position="446"/>
    </location>
</feature>
<feature type="strand" evidence="29">
    <location>
        <begin position="447"/>
        <end position="449"/>
    </location>
</feature>
<feature type="helix" evidence="28">
    <location>
        <begin position="452"/>
        <end position="458"/>
    </location>
</feature>
<feature type="strand" evidence="29">
    <location>
        <begin position="460"/>
        <end position="462"/>
    </location>
</feature>
<feature type="helix" evidence="28">
    <location>
        <begin position="464"/>
        <end position="475"/>
    </location>
</feature>
<feature type="strand" evidence="28">
    <location>
        <begin position="476"/>
        <end position="478"/>
    </location>
</feature>
<feature type="strand" evidence="28">
    <location>
        <begin position="482"/>
        <end position="485"/>
    </location>
</feature>
<feature type="turn" evidence="28">
    <location>
        <begin position="486"/>
        <end position="489"/>
    </location>
</feature>
<feature type="strand" evidence="28">
    <location>
        <begin position="490"/>
        <end position="494"/>
    </location>
</feature>
<feature type="helix" evidence="28">
    <location>
        <begin position="519"/>
        <end position="522"/>
    </location>
</feature>
<feature type="turn" evidence="28">
    <location>
        <begin position="523"/>
        <end position="525"/>
    </location>
</feature>
<feature type="helix" evidence="28">
    <location>
        <begin position="526"/>
        <end position="535"/>
    </location>
</feature>
<feature type="turn" evidence="28">
    <location>
        <begin position="536"/>
        <end position="539"/>
    </location>
</feature>
<feature type="helix" evidence="28">
    <location>
        <begin position="540"/>
        <end position="559"/>
    </location>
</feature>
<feature type="helix" evidence="28">
    <location>
        <begin position="560"/>
        <end position="563"/>
    </location>
</feature>
<feature type="helix" evidence="28">
    <location>
        <begin position="565"/>
        <end position="571"/>
    </location>
</feature>
<feature type="strand" evidence="29">
    <location>
        <begin position="575"/>
        <end position="578"/>
    </location>
</feature>
<feature type="turn" evidence="29">
    <location>
        <begin position="579"/>
        <end position="582"/>
    </location>
</feature>
<feature type="helix" evidence="29">
    <location>
        <begin position="583"/>
        <end position="602"/>
    </location>
</feature>
<reference key="1">
    <citation type="journal article" date="1997" name="DNA Cell Biol.">
        <title>The human p167 gene encodes a unique structural protein that contains centrosomin A homology and associates with a multicomponent complex.</title>
        <authorList>
            <person name="Scholler J.K."/>
            <person name="Kanner S.B."/>
        </authorList>
    </citation>
    <scope>NUCLEOTIDE SEQUENCE [GENOMIC DNA / MRNA] (ISOFORM 1)</scope>
    <scope>SUBCELLULAR LOCATION</scope>
    <source>
        <tissue>Lymphoblastoma</tissue>
    </source>
</reference>
<reference key="2">
    <citation type="journal article" date="1997" name="J. Biol. Chem.">
        <title>Identification of cDNA clones for the large subunit of eukaryotic translation initiation factor 3. Comparison of homologues from human, Nicotiana tabacum, Caenorhabditis elegans, and Saccharomyces cerevisiae.</title>
        <authorList>
            <person name="Johnson K.R."/>
            <person name="Merrick W.C."/>
            <person name="Zoll W.L."/>
            <person name="Zhu Y."/>
        </authorList>
    </citation>
    <scope>NUCLEOTIDE SEQUENCE [MRNA] (ISOFORM 1)</scope>
    <source>
        <tissue>Keratinocyte</tissue>
        <tissue>Liver</tissue>
    </source>
</reference>
<reference key="3">
    <citation type="journal article" date="1995" name="DNA Res.">
        <title>Prediction of the coding sequences of unidentified human genes. IV. The coding sequences of 40 new genes (KIAA0121-KIAA0160) deduced by analysis of cDNA clones from human cell line KG-1.</title>
        <authorList>
            <person name="Nagase T."/>
            <person name="Seki N."/>
            <person name="Tanaka A."/>
            <person name="Ishikawa K."/>
            <person name="Nomura N."/>
        </authorList>
    </citation>
    <scope>NUCLEOTIDE SEQUENCE [LARGE SCALE MRNA] (ISOFORM 1)</scope>
    <source>
        <tissue>Myelomonocyte</tissue>
    </source>
</reference>
<reference key="4">
    <citation type="journal article" date="2004" name="Nat. Genet.">
        <title>Complete sequencing and characterization of 21,243 full-length human cDNAs.</title>
        <authorList>
            <person name="Ota T."/>
            <person name="Suzuki Y."/>
            <person name="Nishikawa T."/>
            <person name="Otsuki T."/>
            <person name="Sugiyama T."/>
            <person name="Irie R."/>
            <person name="Wakamatsu A."/>
            <person name="Hayashi K."/>
            <person name="Sato H."/>
            <person name="Nagai K."/>
            <person name="Kimura K."/>
            <person name="Makita H."/>
            <person name="Sekine M."/>
            <person name="Obayashi M."/>
            <person name="Nishi T."/>
            <person name="Shibahara T."/>
            <person name="Tanaka T."/>
            <person name="Ishii S."/>
            <person name="Yamamoto J."/>
            <person name="Saito K."/>
            <person name="Kawai Y."/>
            <person name="Isono Y."/>
            <person name="Nakamura Y."/>
            <person name="Nagahari K."/>
            <person name="Murakami K."/>
            <person name="Yasuda T."/>
            <person name="Iwayanagi T."/>
            <person name="Wagatsuma M."/>
            <person name="Shiratori A."/>
            <person name="Sudo H."/>
            <person name="Hosoiri T."/>
            <person name="Kaku Y."/>
            <person name="Kodaira H."/>
            <person name="Kondo H."/>
            <person name="Sugawara M."/>
            <person name="Takahashi M."/>
            <person name="Kanda K."/>
            <person name="Yokoi T."/>
            <person name="Furuya T."/>
            <person name="Kikkawa E."/>
            <person name="Omura Y."/>
            <person name="Abe K."/>
            <person name="Kamihara K."/>
            <person name="Katsuta N."/>
            <person name="Sato K."/>
            <person name="Tanikawa M."/>
            <person name="Yamazaki M."/>
            <person name="Ninomiya K."/>
            <person name="Ishibashi T."/>
            <person name="Yamashita H."/>
            <person name="Murakawa K."/>
            <person name="Fujimori K."/>
            <person name="Tanai H."/>
            <person name="Kimata M."/>
            <person name="Watanabe M."/>
            <person name="Hiraoka S."/>
            <person name="Chiba Y."/>
            <person name="Ishida S."/>
            <person name="Ono Y."/>
            <person name="Takiguchi S."/>
            <person name="Watanabe S."/>
            <person name="Yosida M."/>
            <person name="Hotuta T."/>
            <person name="Kusano J."/>
            <person name="Kanehori K."/>
            <person name="Takahashi-Fujii A."/>
            <person name="Hara H."/>
            <person name="Tanase T.-O."/>
            <person name="Nomura Y."/>
            <person name="Togiya S."/>
            <person name="Komai F."/>
            <person name="Hara R."/>
            <person name="Takeuchi K."/>
            <person name="Arita M."/>
            <person name="Imose N."/>
            <person name="Musashino K."/>
            <person name="Yuuki H."/>
            <person name="Oshima A."/>
            <person name="Sasaki N."/>
            <person name="Aotsuka S."/>
            <person name="Yoshikawa Y."/>
            <person name="Matsunawa H."/>
            <person name="Ichihara T."/>
            <person name="Shiohata N."/>
            <person name="Sano S."/>
            <person name="Moriya S."/>
            <person name="Momiyama H."/>
            <person name="Satoh N."/>
            <person name="Takami S."/>
            <person name="Terashima Y."/>
            <person name="Suzuki O."/>
            <person name="Nakagawa S."/>
            <person name="Senoh A."/>
            <person name="Mizoguchi H."/>
            <person name="Goto Y."/>
            <person name="Shimizu F."/>
            <person name="Wakebe H."/>
            <person name="Hishigaki H."/>
            <person name="Watanabe T."/>
            <person name="Sugiyama A."/>
            <person name="Takemoto M."/>
            <person name="Kawakami B."/>
            <person name="Yamazaki M."/>
            <person name="Watanabe K."/>
            <person name="Kumagai A."/>
            <person name="Itakura S."/>
            <person name="Fukuzumi Y."/>
            <person name="Fujimori Y."/>
            <person name="Komiyama M."/>
            <person name="Tashiro H."/>
            <person name="Tanigami A."/>
            <person name="Fujiwara T."/>
            <person name="Ono T."/>
            <person name="Yamada K."/>
            <person name="Fujii Y."/>
            <person name="Ozaki K."/>
            <person name="Hirao M."/>
            <person name="Ohmori Y."/>
            <person name="Kawabata A."/>
            <person name="Hikiji T."/>
            <person name="Kobatake N."/>
            <person name="Inagaki H."/>
            <person name="Ikema Y."/>
            <person name="Okamoto S."/>
            <person name="Okitani R."/>
            <person name="Kawakami T."/>
            <person name="Noguchi S."/>
            <person name="Itoh T."/>
            <person name="Shigeta K."/>
            <person name="Senba T."/>
            <person name="Matsumura K."/>
            <person name="Nakajima Y."/>
            <person name="Mizuno T."/>
            <person name="Morinaga M."/>
            <person name="Sasaki M."/>
            <person name="Togashi T."/>
            <person name="Oyama M."/>
            <person name="Hata H."/>
            <person name="Watanabe M."/>
            <person name="Komatsu T."/>
            <person name="Mizushima-Sugano J."/>
            <person name="Satoh T."/>
            <person name="Shirai Y."/>
            <person name="Takahashi Y."/>
            <person name="Nakagawa K."/>
            <person name="Okumura K."/>
            <person name="Nagase T."/>
            <person name="Nomura N."/>
            <person name="Kikuchi H."/>
            <person name="Masuho Y."/>
            <person name="Yamashita R."/>
            <person name="Nakai K."/>
            <person name="Yada T."/>
            <person name="Nakamura Y."/>
            <person name="Ohara O."/>
            <person name="Isogai T."/>
            <person name="Sugano S."/>
        </authorList>
    </citation>
    <scope>NUCLEOTIDE SEQUENCE [LARGE SCALE MRNA] (ISOFORM 2)</scope>
    <scope>VARIANT LYS-386</scope>
    <source>
        <tissue>Testis</tissue>
    </source>
</reference>
<reference key="5">
    <citation type="journal article" date="2004" name="Nature">
        <title>The DNA sequence and comparative analysis of human chromosome 10.</title>
        <authorList>
            <person name="Deloukas P."/>
            <person name="Earthrowl M.E."/>
            <person name="Grafham D.V."/>
            <person name="Rubenfield M."/>
            <person name="French L."/>
            <person name="Steward C.A."/>
            <person name="Sims S.K."/>
            <person name="Jones M.C."/>
            <person name="Searle S."/>
            <person name="Scott C."/>
            <person name="Howe K."/>
            <person name="Hunt S.E."/>
            <person name="Andrews T.D."/>
            <person name="Gilbert J.G.R."/>
            <person name="Swarbreck D."/>
            <person name="Ashurst J.L."/>
            <person name="Taylor A."/>
            <person name="Battles J."/>
            <person name="Bird C.P."/>
            <person name="Ainscough R."/>
            <person name="Almeida J.P."/>
            <person name="Ashwell R.I.S."/>
            <person name="Ambrose K.D."/>
            <person name="Babbage A.K."/>
            <person name="Bagguley C.L."/>
            <person name="Bailey J."/>
            <person name="Banerjee R."/>
            <person name="Bates K."/>
            <person name="Beasley H."/>
            <person name="Bray-Allen S."/>
            <person name="Brown A.J."/>
            <person name="Brown J.Y."/>
            <person name="Burford D.C."/>
            <person name="Burrill W."/>
            <person name="Burton J."/>
            <person name="Cahill P."/>
            <person name="Camire D."/>
            <person name="Carter N.P."/>
            <person name="Chapman J.C."/>
            <person name="Clark S.Y."/>
            <person name="Clarke G."/>
            <person name="Clee C.M."/>
            <person name="Clegg S."/>
            <person name="Corby N."/>
            <person name="Coulson A."/>
            <person name="Dhami P."/>
            <person name="Dutta I."/>
            <person name="Dunn M."/>
            <person name="Faulkner L."/>
            <person name="Frankish A."/>
            <person name="Frankland J.A."/>
            <person name="Garner P."/>
            <person name="Garnett J."/>
            <person name="Gribble S."/>
            <person name="Griffiths C."/>
            <person name="Grocock R."/>
            <person name="Gustafson E."/>
            <person name="Hammond S."/>
            <person name="Harley J.L."/>
            <person name="Hart E."/>
            <person name="Heath P.D."/>
            <person name="Ho T.P."/>
            <person name="Hopkins B."/>
            <person name="Horne J."/>
            <person name="Howden P.J."/>
            <person name="Huckle E."/>
            <person name="Hynds C."/>
            <person name="Johnson C."/>
            <person name="Johnson D."/>
            <person name="Kana A."/>
            <person name="Kay M."/>
            <person name="Kimberley A.M."/>
            <person name="Kershaw J.K."/>
            <person name="Kokkinaki M."/>
            <person name="Laird G.K."/>
            <person name="Lawlor S."/>
            <person name="Lee H.M."/>
            <person name="Leongamornlert D.A."/>
            <person name="Laird G."/>
            <person name="Lloyd C."/>
            <person name="Lloyd D.M."/>
            <person name="Loveland J."/>
            <person name="Lovell J."/>
            <person name="McLaren S."/>
            <person name="McLay K.E."/>
            <person name="McMurray A."/>
            <person name="Mashreghi-Mohammadi M."/>
            <person name="Matthews L."/>
            <person name="Milne S."/>
            <person name="Nickerson T."/>
            <person name="Nguyen M."/>
            <person name="Overton-Larty E."/>
            <person name="Palmer S.A."/>
            <person name="Pearce A.V."/>
            <person name="Peck A.I."/>
            <person name="Pelan S."/>
            <person name="Phillimore B."/>
            <person name="Porter K."/>
            <person name="Rice C.M."/>
            <person name="Rogosin A."/>
            <person name="Ross M.T."/>
            <person name="Sarafidou T."/>
            <person name="Sehra H.K."/>
            <person name="Shownkeen R."/>
            <person name="Skuce C.D."/>
            <person name="Smith M."/>
            <person name="Standring L."/>
            <person name="Sycamore N."/>
            <person name="Tester J."/>
            <person name="Thorpe A."/>
            <person name="Torcasso W."/>
            <person name="Tracey A."/>
            <person name="Tromans A."/>
            <person name="Tsolas J."/>
            <person name="Wall M."/>
            <person name="Walsh J."/>
            <person name="Wang H."/>
            <person name="Weinstock K."/>
            <person name="West A.P."/>
            <person name="Willey D.L."/>
            <person name="Whitehead S.L."/>
            <person name="Wilming L."/>
            <person name="Wray P.W."/>
            <person name="Young L."/>
            <person name="Chen Y."/>
            <person name="Lovering R.C."/>
            <person name="Moschonas N.K."/>
            <person name="Siebert R."/>
            <person name="Fechtel K."/>
            <person name="Bentley D."/>
            <person name="Durbin R.M."/>
            <person name="Hubbard T."/>
            <person name="Doucette-Stamm L."/>
            <person name="Beck S."/>
            <person name="Smith D.R."/>
            <person name="Rogers J."/>
        </authorList>
    </citation>
    <scope>NUCLEOTIDE SEQUENCE [LARGE SCALE GENOMIC DNA]</scope>
</reference>
<reference key="6">
    <citation type="submission" date="2005-09" db="EMBL/GenBank/DDBJ databases">
        <authorList>
            <person name="Mural R.J."/>
            <person name="Istrail S."/>
            <person name="Sutton G.G."/>
            <person name="Florea L."/>
            <person name="Halpern A.L."/>
            <person name="Mobarry C.M."/>
            <person name="Lippert R."/>
            <person name="Walenz B."/>
            <person name="Shatkay H."/>
            <person name="Dew I."/>
            <person name="Miller J.R."/>
            <person name="Flanigan M.J."/>
            <person name="Edwards N.J."/>
            <person name="Bolanos R."/>
            <person name="Fasulo D."/>
            <person name="Halldorsson B.V."/>
            <person name="Hannenhalli S."/>
            <person name="Turner R."/>
            <person name="Yooseph S."/>
            <person name="Lu F."/>
            <person name="Nusskern D.R."/>
            <person name="Shue B.C."/>
            <person name="Zheng X.H."/>
            <person name="Zhong F."/>
            <person name="Delcher A.L."/>
            <person name="Huson D.H."/>
            <person name="Kravitz S.A."/>
            <person name="Mouchard L."/>
            <person name="Reinert K."/>
            <person name="Remington K.A."/>
            <person name="Clark A.G."/>
            <person name="Waterman M.S."/>
            <person name="Eichler E.E."/>
            <person name="Adams M.D."/>
            <person name="Hunkapiller M.W."/>
            <person name="Myers E.W."/>
            <person name="Venter J.C."/>
        </authorList>
    </citation>
    <scope>NUCLEOTIDE SEQUENCE [LARGE SCALE GENOMIC DNA]</scope>
</reference>
<reference key="7">
    <citation type="submission" date="2007-07" db="UniProtKB">
        <authorList>
            <person name="Bienvenut W.V."/>
            <person name="Boldt K."/>
            <person name="von Kriegsheim A.F."/>
            <person name="Matallanas D."/>
            <person name="Cooper W.N."/>
            <person name="Kolch W."/>
        </authorList>
    </citation>
    <scope>PROTEIN SEQUENCE OF 2-13; 15-36; 69-75; 85-91; 144-151; 173-183; 252-264; 279-298; 309-317; 322-335; 341-351; 368-388; 439-469; 490-546; 582-589; 624-632; 694-711; 719-740; 776-782; 817-824; 838-847; 850-856; 862-868; 877-885; 1071-1080; 1122-1130; 1142-1150 AND 1358-1366</scope>
    <scope>CLEAVAGE OF INITIATOR METHIONINE</scope>
    <scope>IDENTIFICATION BY MASS SPECTROMETRY</scope>
    <source>
        <tissue>Hepatoma</tissue>
        <tissue>Mammary carcinoma</tissue>
    </source>
</reference>
<reference key="8">
    <citation type="journal article" date="2001" name="J. Cell. Biochem.">
        <title>Molecular interaction between human tumor marker protein p150, the largest subunit of eIF3, and intermediate filament protein K7.</title>
        <authorList>
            <person name="Lin L."/>
            <person name="Holbro T."/>
            <person name="Alonso G."/>
            <person name="Gerosa D."/>
            <person name="Burger M.M."/>
        </authorList>
    </citation>
    <scope>FUNCTION</scope>
    <scope>INTERACTION WITH EIF3B AND KRT7</scope>
</reference>
<reference key="9">
    <citation type="journal article" date="2003" name="Eur. J. Biochem.">
        <title>Characterization of eIF3k: a newly discovered subunit of mammalian translation initiation factor eIF3.</title>
        <authorList>
            <person name="Mayeur G.L."/>
            <person name="Fraser C.S."/>
            <person name="Peiretti F."/>
            <person name="Block K.L."/>
            <person name="Hershey J.W.B."/>
        </authorList>
    </citation>
    <scope>INTERACTION WITH EIF3B</scope>
</reference>
<reference key="10">
    <citation type="journal article" date="2004" name="J. Biol. Chem.">
        <title>The j-subunit of human translation initiation factor eIF3 is required for the stable binding of eIF3 and its subcomplexes to 40 S ribosomal subunits in vitro.</title>
        <authorList>
            <person name="Fraser C.S."/>
            <person name="Lee J.Y."/>
            <person name="Mayeur G.L."/>
            <person name="Bushell M."/>
            <person name="Doudna J.A."/>
            <person name="Hershey J.W.B."/>
        </authorList>
    </citation>
    <scope>INTERACTION WITH EIF3B</scope>
</reference>
<reference key="11">
    <citation type="journal article" date="2005" name="RNA">
        <title>Binding of eukaryotic initiation factor 3 to ribosomal 40S subunits and its role in ribosomal dissociation and anti-association.</title>
        <authorList>
            <person name="Kolupaeva V.G."/>
            <person name="Unbehaun A."/>
            <person name="Lomakin I.B."/>
            <person name="Hellen C.U.T."/>
            <person name="Pestova T.V."/>
        </authorList>
    </citation>
    <scope>CHARACTERIZATION OF THE EIF-3 COMPLEX</scope>
</reference>
<reference key="12">
    <citation type="journal article" date="2006" name="J. Biol. Chem.">
        <title>Translation initiation factor eIF4G-1 binds to eIF3 through the eIF3e subunit.</title>
        <authorList>
            <person name="LeFebvre A.K."/>
            <person name="Korneeva N.L."/>
            <person name="Trutschl M."/>
            <person name="Cvek U."/>
            <person name="Duzan R.D."/>
            <person name="Bradley C.A."/>
            <person name="Hershey J.W.B."/>
            <person name="Rhoads R.E."/>
        </authorList>
    </citation>
    <scope>IDENTIFICATION IN THE EIF-3 COMPLEX</scope>
    <scope>IDENTIFICATION BY MASS SPECTROMETRY</scope>
</reference>
<reference key="13">
    <citation type="journal article" date="2007" name="EMBO J.">
        <title>Reconstitution reveals the functional core of mammalian eIF3.</title>
        <authorList>
            <person name="Masutani M."/>
            <person name="Sonenberg N."/>
            <person name="Yokoyama S."/>
            <person name="Imataka H."/>
        </authorList>
    </citation>
    <scope>FUNCTION</scope>
    <scope>CHARACTERIZATION OF THE EIF-3 COMPLEX</scope>
</reference>
<reference key="14">
    <citation type="journal article" date="2007" name="EMBO Rep.">
        <title>Human INT6/eIF3e is required for nonsense-mediated mRNA decay.</title>
        <authorList>
            <person name="Morris C."/>
            <person name="Wittmann J."/>
            <person name="Jaeck H.-M."/>
            <person name="Jalinot P."/>
        </authorList>
    </citation>
    <scope>INTERACTION WITH EIF3E</scope>
</reference>
<reference key="15">
    <citation type="journal article" date="2007" name="Genes Dev.">
        <title>The mechanism of an exceptional case of reinitiation after translation of a long ORF reveals why such events do not generally occur in mammalian mRNA translation.</title>
        <authorList>
            <person name="Poyry T.A."/>
            <person name="Kaminski A."/>
            <person name="Connell E.J."/>
            <person name="Fraser C.S."/>
            <person name="Jackson R.J."/>
        </authorList>
    </citation>
    <scope>FUNCTION (MICROBIAL INFECTION)</scope>
</reference>
<reference key="16">
    <citation type="journal article" date="2007" name="Mol. Cell. Proteomics">
        <title>Structural characterization of the human eukaryotic initiation factor 3 protein complex by mass spectrometry.</title>
        <authorList>
            <person name="Damoc E."/>
            <person name="Fraser C.S."/>
            <person name="Zhou M."/>
            <person name="Videler H."/>
            <person name="Mayeur G.L."/>
            <person name="Hershey J.W.B."/>
            <person name="Doudna J.A."/>
            <person name="Robinson C.V."/>
            <person name="Leary J.A."/>
        </authorList>
    </citation>
    <scope>IDENTIFICATION IN THE EIF-3 COMPLEX</scope>
    <scope>CHARACTERIZATION OF THE EIF-3 COMPLEX</scope>
    <scope>CLEAVAGE OF INITIATOR METHIONINE</scope>
    <scope>PHOSPHORYLATION AT SER-881; SER-1198; SER-1336 AND SER-1364</scope>
    <scope>MASS SPECTROMETRY</scope>
</reference>
<reference key="17">
    <citation type="journal article" date="2008" name="Proc. Natl. Acad. Sci. U.S.A.">
        <title>A quantitative atlas of mitotic phosphorylation.</title>
        <authorList>
            <person name="Dephoure N."/>
            <person name="Zhou C."/>
            <person name="Villen J."/>
            <person name="Beausoleil S.A."/>
            <person name="Bakalarski C.E."/>
            <person name="Elledge S.J."/>
            <person name="Gygi S.P."/>
        </authorList>
    </citation>
    <scope>IDENTIFICATION BY MASS SPECTROMETRY [LARGE SCALE ANALYSIS]</scope>
    <source>
        <tissue>Cervix carcinoma</tissue>
    </source>
</reference>
<reference key="18">
    <citation type="journal article" date="2008" name="Proc. Natl. Acad. Sci. U.S.A.">
        <title>Mass spectrometry reveals modularity and a complete subunit interaction map of the eukaryotic translation factor eIF3.</title>
        <authorList>
            <person name="Zhou M."/>
            <person name="Sandercock A.M."/>
            <person name="Fraser C.S."/>
            <person name="Ridlova G."/>
            <person name="Stephens E."/>
            <person name="Schenauer M.R."/>
            <person name="Yokoi-Fong T."/>
            <person name="Barsky D."/>
            <person name="Leary J.A."/>
            <person name="Hershey J.W.B."/>
            <person name="Doudna J.A."/>
            <person name="Robinson C.V."/>
        </authorList>
    </citation>
    <scope>IDENTIFICATION IN THE EIF-3 COMPLEX</scope>
    <scope>CHARACTERIZATION OF THE EIF-3 COMPLEX</scope>
    <scope>IDENTIFICATION BY MASS SPECTROMETRY</scope>
</reference>
<reference key="19">
    <citation type="journal article" date="2009" name="Sci. Signal.">
        <title>Quantitative phosphoproteomic analysis of T cell receptor signaling reveals system-wide modulation of protein-protein interactions.</title>
        <authorList>
            <person name="Mayya V."/>
            <person name="Lundgren D.H."/>
            <person name="Hwang S.-I."/>
            <person name="Rezaul K."/>
            <person name="Wu L."/>
            <person name="Eng J.K."/>
            <person name="Rodionov V."/>
            <person name="Han D.K."/>
        </authorList>
    </citation>
    <scope>PHOSPHORYLATION [LARGE SCALE ANALYSIS] AT SER-492</scope>
    <scope>IDENTIFICATION BY MASS SPECTROMETRY [LARGE SCALE ANALYSIS]</scope>
    <source>
        <tissue>Leukemic T-cell</tissue>
    </source>
</reference>
<reference key="20">
    <citation type="journal article" date="2009" name="Science">
        <title>Lysine acetylation targets protein complexes and co-regulates major cellular functions.</title>
        <authorList>
            <person name="Choudhary C."/>
            <person name="Kumar C."/>
            <person name="Gnad F."/>
            <person name="Nielsen M.L."/>
            <person name="Rehman M."/>
            <person name="Walther T.C."/>
            <person name="Olsen J.V."/>
            <person name="Mann M."/>
        </authorList>
    </citation>
    <scope>ACETYLATION [LARGE SCALE ANALYSIS] AT LYS-68</scope>
    <scope>IDENTIFICATION BY MASS SPECTROMETRY [LARGE SCALE ANALYSIS]</scope>
</reference>
<reference key="21">
    <citation type="journal article" date="2010" name="Sci. Signal.">
        <title>Quantitative phosphoproteomics reveals widespread full phosphorylation site occupancy during mitosis.</title>
        <authorList>
            <person name="Olsen J.V."/>
            <person name="Vermeulen M."/>
            <person name="Santamaria A."/>
            <person name="Kumar C."/>
            <person name="Miller M.L."/>
            <person name="Jensen L.J."/>
            <person name="Gnad F."/>
            <person name="Cox J."/>
            <person name="Jensen T.S."/>
            <person name="Nigg E.A."/>
            <person name="Brunak S."/>
            <person name="Mann M."/>
        </authorList>
    </citation>
    <scope>PHOSPHORYLATION [LARGE SCALE ANALYSIS] AT SER-882</scope>
    <scope>IDENTIFICATION BY MASS SPECTROMETRY [LARGE SCALE ANALYSIS]</scope>
    <source>
        <tissue>Cervix carcinoma</tissue>
    </source>
</reference>
<reference key="22">
    <citation type="journal article" date="2011" name="BMC Syst. Biol.">
        <title>Initial characterization of the human central proteome.</title>
        <authorList>
            <person name="Burkard T.R."/>
            <person name="Planyavsky M."/>
            <person name="Kaupe I."/>
            <person name="Breitwieser F.P."/>
            <person name="Buerckstuemmer T."/>
            <person name="Bennett K.L."/>
            <person name="Superti-Furga G."/>
            <person name="Colinge J."/>
        </authorList>
    </citation>
    <scope>IDENTIFICATION BY MASS SPECTROMETRY [LARGE SCALE ANALYSIS]</scope>
</reference>
<reference key="23">
    <citation type="journal article" date="2013" name="J. Proteome Res.">
        <title>Toward a comprehensive characterization of a human cancer cell phosphoproteome.</title>
        <authorList>
            <person name="Zhou H."/>
            <person name="Di Palma S."/>
            <person name="Preisinger C."/>
            <person name="Peng M."/>
            <person name="Polat A.N."/>
            <person name="Heck A.J."/>
            <person name="Mohammed S."/>
        </authorList>
    </citation>
    <scope>PHOSPHORYLATION [LARGE SCALE ANALYSIS] AT SER-492; SER-584; SER-881; SER-882; SER-895; SER-949; SER-1028; SER-1188; SER-1198; SER-1262 AND SER-1336</scope>
    <scope>IDENTIFICATION BY MASS SPECTROMETRY [LARGE SCALE ANALYSIS]</scope>
    <source>
        <tissue>Cervix carcinoma</tissue>
        <tissue>Erythroleukemia</tissue>
    </source>
</reference>
<reference key="24">
    <citation type="journal article" date="2013" name="Nucleic Acids Res.">
        <title>Two RNA-binding motifs in eIF3 direct HCV IRES-dependent translation.</title>
        <authorList>
            <person name="Sun C."/>
            <person name="Querol-Audi J."/>
            <person name="Mortimer S.A."/>
            <person name="Arias-Palomo E."/>
            <person name="Doudna J.A."/>
            <person name="Nogales E."/>
            <person name="Cate J.H."/>
        </authorList>
    </citation>
    <scope>FUNCTION (MICROBIAL INFECTION)</scope>
</reference>
<reference key="25">
    <citation type="journal article" date="2014" name="EMBO J.">
        <title>The mechanism of translation initiation on Type 1 picornavirus IRESs.</title>
        <authorList>
            <person name="Sweeney T.R."/>
            <person name="Abaeva I.S."/>
            <person name="Pestova T.V."/>
            <person name="Hellen C.U."/>
        </authorList>
    </citation>
    <scope>FUNCTION (MICROBIAL INFECTION)</scope>
</reference>
<reference key="26">
    <citation type="journal article" date="2014" name="J. Proteomics">
        <title>An enzyme assisted RP-RPLC approach for in-depth analysis of human liver phosphoproteome.</title>
        <authorList>
            <person name="Bian Y."/>
            <person name="Song C."/>
            <person name="Cheng K."/>
            <person name="Dong M."/>
            <person name="Wang F."/>
            <person name="Huang J."/>
            <person name="Sun D."/>
            <person name="Wang L."/>
            <person name="Ye M."/>
            <person name="Zou H."/>
        </authorList>
    </citation>
    <scope>PHOSPHORYLATION [LARGE SCALE ANALYSIS] AT SER-882</scope>
    <scope>IDENTIFICATION BY MASS SPECTROMETRY [LARGE SCALE ANALYSIS]</scope>
    <source>
        <tissue>Liver</tissue>
    </source>
</reference>
<reference key="27">
    <citation type="journal article" date="2015" name="Nature">
        <title>eIF3 targets cell-proliferation messenger RNAs for translational activation or repression.</title>
        <authorList>
            <person name="Lee A.S."/>
            <person name="Kranzusch P.J."/>
            <person name="Cate J.H."/>
        </authorList>
    </citation>
    <scope>FUNCTION</scope>
    <scope>IDENTIFICATION IN THE EIF-3 COMPLEX</scope>
    <scope>RNA-BINDING</scope>
</reference>
<reference key="28">
    <citation type="journal article" date="2015" name="Proteomics">
        <title>N-terminome analysis of the human mitochondrial proteome.</title>
        <authorList>
            <person name="Vaca Jacome A.S."/>
            <person name="Rabilloud T."/>
            <person name="Schaeffer-Reiss C."/>
            <person name="Rompais M."/>
            <person name="Ayoub D."/>
            <person name="Lane L."/>
            <person name="Bairoch A."/>
            <person name="Van Dorsselaer A."/>
            <person name="Carapito C."/>
        </authorList>
    </citation>
    <scope>IDENTIFICATION BY MASS SPECTROMETRY [LARGE SCALE ANALYSIS]</scope>
</reference>
<reference key="29">
    <citation type="journal article" date="2016" name="Nature">
        <title>eIF3d is an mRNA cap-binding protein that is required for specialized translation initiation.</title>
        <authorList>
            <person name="Lee A.S."/>
            <person name="Kranzusch P.J."/>
            <person name="Doudna J.A."/>
            <person name="Cate J.H."/>
        </authorList>
    </citation>
    <scope>FUNCTION</scope>
    <scope>RNA-BINDING</scope>
</reference>
<reference key="30">
    <citation type="journal article" date="2005" name="Science">
        <title>Structural roles for human translation factor eIF3 in initiation of protein synthesis.</title>
        <authorList>
            <person name="Siridechadilok B."/>
            <person name="Fraser C.S."/>
            <person name="Hall R.J."/>
            <person name="Doudna J.A."/>
            <person name="Nogales E."/>
        </authorList>
    </citation>
    <scope>3D-STRUCTURE MODELING</scope>
    <scope>ELECTRON MICROSCOPY</scope>
</reference>
<dbReference type="EMBL" id="U58046">
    <property type="protein sequence ID" value="AAB41584.1"/>
    <property type="molecule type" value="mRNA"/>
</dbReference>
<dbReference type="EMBL" id="U58047">
    <property type="protein sequence ID" value="AAB41586.1"/>
    <property type="molecule type" value="Genomic_DNA"/>
</dbReference>
<dbReference type="EMBL" id="U78311">
    <property type="protein sequence ID" value="AAB80695.1"/>
    <property type="molecule type" value="mRNA"/>
</dbReference>
<dbReference type="EMBL" id="D50929">
    <property type="protein sequence ID" value="BAA09488.2"/>
    <property type="status" value="ALT_INIT"/>
    <property type="molecule type" value="mRNA"/>
</dbReference>
<dbReference type="EMBL" id="AK302575">
    <property type="protein sequence ID" value="BAG63833.1"/>
    <property type="molecule type" value="mRNA"/>
</dbReference>
<dbReference type="EMBL" id="AL355598">
    <property type="status" value="NOT_ANNOTATED_CDS"/>
    <property type="molecule type" value="Genomic_DNA"/>
</dbReference>
<dbReference type="EMBL" id="CH471066">
    <property type="protein sequence ID" value="EAW49408.1"/>
    <property type="molecule type" value="Genomic_DNA"/>
</dbReference>
<dbReference type="CCDS" id="CCDS7608.1">
    <molecule id="Q14152-1"/>
</dbReference>
<dbReference type="RefSeq" id="NP_003741.1">
    <molecule id="Q14152-1"/>
    <property type="nucleotide sequence ID" value="NM_003750.4"/>
</dbReference>
<dbReference type="PDB" id="3J8B">
    <property type="method" value="EM"/>
    <property type="chains" value="A=1-494"/>
</dbReference>
<dbReference type="PDB" id="3J8C">
    <property type="method" value="EM"/>
    <property type="chains" value="A=1-494"/>
</dbReference>
<dbReference type="PDB" id="6YBD">
    <property type="method" value="EM"/>
    <property type="resolution" value="3.30 A"/>
    <property type="chains" value="u=1-1382"/>
</dbReference>
<dbReference type="PDB" id="6YBT">
    <property type="method" value="EM"/>
    <property type="resolution" value="6.00 A"/>
    <property type="chains" value="u=33-1382"/>
</dbReference>
<dbReference type="PDB" id="6ZMW">
    <property type="method" value="EM"/>
    <property type="resolution" value="3.70 A"/>
    <property type="chains" value="u=1-1382"/>
</dbReference>
<dbReference type="PDB" id="6ZON">
    <property type="method" value="EM"/>
    <property type="resolution" value="3.00 A"/>
    <property type="chains" value="A=1-601"/>
</dbReference>
<dbReference type="PDB" id="6ZP4">
    <property type="method" value="EM"/>
    <property type="resolution" value="2.90 A"/>
    <property type="chains" value="A=1-1382"/>
</dbReference>
<dbReference type="PDB" id="6ZVJ">
    <property type="method" value="EM"/>
    <property type="resolution" value="3.80 A"/>
    <property type="chains" value="A=4-725"/>
</dbReference>
<dbReference type="PDB" id="7A09">
    <property type="method" value="EM"/>
    <property type="resolution" value="3.50 A"/>
    <property type="chains" value="A=1-1382"/>
</dbReference>
<dbReference type="PDB" id="7QP6">
    <property type="method" value="EM"/>
    <property type="resolution" value="4.70 A"/>
    <property type="chains" value="u=1-1382"/>
</dbReference>
<dbReference type="PDB" id="7QP7">
    <property type="method" value="EM"/>
    <property type="resolution" value="3.70 A"/>
    <property type="chains" value="u=1-1382"/>
</dbReference>
<dbReference type="PDB" id="8OZ0">
    <property type="method" value="EM"/>
    <property type="resolution" value="3.50 A"/>
    <property type="chains" value="A=1-1382"/>
</dbReference>
<dbReference type="PDB" id="8PJ1">
    <property type="method" value="EM"/>
    <property type="resolution" value="3.40 A"/>
    <property type="chains" value="u=1-1382"/>
</dbReference>
<dbReference type="PDB" id="8PJ2">
    <property type="method" value="EM"/>
    <property type="resolution" value="3.40 A"/>
    <property type="chains" value="u=1-1382"/>
</dbReference>
<dbReference type="PDB" id="8PJ3">
    <property type="method" value="EM"/>
    <property type="resolution" value="3.70 A"/>
    <property type="chains" value="u=1-1382"/>
</dbReference>
<dbReference type="PDB" id="8PJ4">
    <property type="method" value="EM"/>
    <property type="resolution" value="3.20 A"/>
    <property type="chains" value="u=1-1382"/>
</dbReference>
<dbReference type="PDB" id="8PJ5">
    <property type="method" value="EM"/>
    <property type="resolution" value="2.90 A"/>
    <property type="chains" value="u=1-1382"/>
</dbReference>
<dbReference type="PDB" id="8PJ6">
    <property type="method" value="EM"/>
    <property type="resolution" value="2.90 A"/>
    <property type="chains" value="u=1-1382"/>
</dbReference>
<dbReference type="PDB" id="8PPL">
    <property type="method" value="EM"/>
    <property type="resolution" value="2.65 A"/>
    <property type="chains" value="Iu=1-1382"/>
</dbReference>
<dbReference type="PDB" id="8RG0">
    <property type="method" value="EM"/>
    <property type="resolution" value="3.40 A"/>
    <property type="chains" value="u=1-1382"/>
</dbReference>
<dbReference type="PDB" id="8XXN">
    <property type="method" value="EM"/>
    <property type="resolution" value="3.60 A"/>
    <property type="chains" value="3A=1-1382"/>
</dbReference>
<dbReference type="PDB" id="9BLN">
    <property type="method" value="EM"/>
    <property type="resolution" value="3.90 A"/>
    <property type="chains" value="u=1-1382"/>
</dbReference>
<dbReference type="PDBsum" id="3J8B"/>
<dbReference type="PDBsum" id="3J8C"/>
<dbReference type="PDBsum" id="6YBD"/>
<dbReference type="PDBsum" id="6YBT"/>
<dbReference type="PDBsum" id="6ZMW"/>
<dbReference type="PDBsum" id="6ZON"/>
<dbReference type="PDBsum" id="6ZP4"/>
<dbReference type="PDBsum" id="6ZVJ"/>
<dbReference type="PDBsum" id="7A09"/>
<dbReference type="PDBsum" id="7QP6"/>
<dbReference type="PDBsum" id="7QP7"/>
<dbReference type="PDBsum" id="8OZ0"/>
<dbReference type="PDBsum" id="8PJ1"/>
<dbReference type="PDBsum" id="8PJ2"/>
<dbReference type="PDBsum" id="8PJ3"/>
<dbReference type="PDBsum" id="8PJ4"/>
<dbReference type="PDBsum" id="8PJ5"/>
<dbReference type="PDBsum" id="8PJ6"/>
<dbReference type="PDBsum" id="8PPL"/>
<dbReference type="PDBsum" id="8RG0"/>
<dbReference type="PDBsum" id="8XXN"/>
<dbReference type="PDBsum" id="9BLN"/>
<dbReference type="EMDB" id="EMD-10769"/>
<dbReference type="EMDB" id="EMD-10773"/>
<dbReference type="EMDB" id="EMD-11302"/>
<dbReference type="EMDB" id="EMD-11325"/>
<dbReference type="EMDB" id="EMD-11335"/>
<dbReference type="EMDB" id="EMD-11458"/>
<dbReference type="EMDB" id="EMD-11602"/>
<dbReference type="EMDB" id="EMD-14113"/>
<dbReference type="EMDB" id="EMD-14114"/>
<dbReference type="EMDB" id="EMD-17297"/>
<dbReference type="EMDB" id="EMD-17696"/>
<dbReference type="EMDB" id="EMD-17697"/>
<dbReference type="EMDB" id="EMD-17698"/>
<dbReference type="EMDB" id="EMD-17699"/>
<dbReference type="EMDB" id="EMD-17700"/>
<dbReference type="EMDB" id="EMD-17701"/>
<dbReference type="EMDB" id="EMD-17805"/>
<dbReference type="EMDB" id="EMD-19128"/>
<dbReference type="EMDB" id="EMD-38754"/>
<dbReference type="EMDB" id="EMD-44671"/>
<dbReference type="SMR" id="Q14152"/>
<dbReference type="BioGRID" id="114210">
    <property type="interactions" value="366"/>
</dbReference>
<dbReference type="ComplexPortal" id="CPX-6036">
    <property type="entry name" value="Eukaryotic translation initiation factor 3 complex"/>
</dbReference>
<dbReference type="CORUM" id="Q14152"/>
<dbReference type="DIP" id="DIP-31114N"/>
<dbReference type="FunCoup" id="Q14152">
    <property type="interactions" value="4172"/>
</dbReference>
<dbReference type="IntAct" id="Q14152">
    <property type="interactions" value="176"/>
</dbReference>
<dbReference type="MINT" id="Q14152"/>
<dbReference type="STRING" id="9606.ENSP00000358140"/>
<dbReference type="MoonProt" id="Q14152"/>
<dbReference type="GlyGen" id="Q14152">
    <property type="glycosylation" value="7 sites, 1 N-linked glycan (2 sites), 1 O-linked glycan (5 sites)"/>
</dbReference>
<dbReference type="iPTMnet" id="Q14152"/>
<dbReference type="MetOSite" id="Q14152"/>
<dbReference type="PhosphoSitePlus" id="Q14152"/>
<dbReference type="SwissPalm" id="Q14152"/>
<dbReference type="BioMuta" id="EIF3A"/>
<dbReference type="DMDM" id="6685537"/>
<dbReference type="jPOST" id="Q14152"/>
<dbReference type="MassIVE" id="Q14152"/>
<dbReference type="PaxDb" id="9606-ENSP00000358140"/>
<dbReference type="PeptideAtlas" id="Q14152"/>
<dbReference type="ProteomicsDB" id="26155"/>
<dbReference type="ProteomicsDB" id="59854">
    <molecule id="Q14152-1"/>
</dbReference>
<dbReference type="Pumba" id="Q14152"/>
<dbReference type="Antibodypedia" id="32084">
    <property type="antibodies" value="296 antibodies from 34 providers"/>
</dbReference>
<dbReference type="DNASU" id="8661"/>
<dbReference type="Ensembl" id="ENST00000369144.8">
    <molecule id="Q14152-1"/>
    <property type="protein sequence ID" value="ENSP00000358140.3"/>
    <property type="gene ID" value="ENSG00000107581.14"/>
</dbReference>
<dbReference type="GeneID" id="8661"/>
<dbReference type="KEGG" id="hsa:8661"/>
<dbReference type="MANE-Select" id="ENST00000369144.8">
    <property type="protein sequence ID" value="ENSP00000358140.3"/>
    <property type="RefSeq nucleotide sequence ID" value="NM_003750.4"/>
    <property type="RefSeq protein sequence ID" value="NP_003741.1"/>
</dbReference>
<dbReference type="UCSC" id="uc001ldu.4">
    <molecule id="Q14152-1"/>
    <property type="organism name" value="human"/>
</dbReference>
<dbReference type="AGR" id="HGNC:3271"/>
<dbReference type="CTD" id="8661"/>
<dbReference type="DisGeNET" id="8661"/>
<dbReference type="GeneCards" id="EIF3A"/>
<dbReference type="HGNC" id="HGNC:3271">
    <property type="gene designation" value="EIF3A"/>
</dbReference>
<dbReference type="HPA" id="ENSG00000107581">
    <property type="expression patterns" value="Low tissue specificity"/>
</dbReference>
<dbReference type="MIM" id="602039">
    <property type="type" value="gene"/>
</dbReference>
<dbReference type="neXtProt" id="NX_Q14152"/>
<dbReference type="OpenTargets" id="ENSG00000107581"/>
<dbReference type="PharmGKB" id="PA27699"/>
<dbReference type="VEuPathDB" id="HostDB:ENSG00000107581"/>
<dbReference type="eggNOG" id="KOG2072">
    <property type="taxonomic scope" value="Eukaryota"/>
</dbReference>
<dbReference type="GeneTree" id="ENSGT00730000111063"/>
<dbReference type="HOGENOM" id="CLU_002096_1_1_1"/>
<dbReference type="InParanoid" id="Q14152"/>
<dbReference type="OMA" id="EHITNKR"/>
<dbReference type="OrthoDB" id="18884at2759"/>
<dbReference type="PAN-GO" id="Q14152">
    <property type="GO annotations" value="7 GO annotations based on evolutionary models"/>
</dbReference>
<dbReference type="PhylomeDB" id="Q14152"/>
<dbReference type="TreeFam" id="TF101522"/>
<dbReference type="PathwayCommons" id="Q14152"/>
<dbReference type="Reactome" id="R-HSA-156827">
    <property type="pathway name" value="L13a-mediated translational silencing of Ceruloplasmin expression"/>
</dbReference>
<dbReference type="Reactome" id="R-HSA-72649">
    <property type="pathway name" value="Translation initiation complex formation"/>
</dbReference>
<dbReference type="Reactome" id="R-HSA-72689">
    <property type="pathway name" value="Formation of a pool of free 40S subunits"/>
</dbReference>
<dbReference type="Reactome" id="R-HSA-72695">
    <property type="pathway name" value="Formation of the ternary complex, and subsequently, the 43S complex"/>
</dbReference>
<dbReference type="Reactome" id="R-HSA-72702">
    <property type="pathway name" value="Ribosomal scanning and start codon recognition"/>
</dbReference>
<dbReference type="Reactome" id="R-HSA-72706">
    <property type="pathway name" value="GTP hydrolysis and joining of the 60S ribosomal subunit"/>
</dbReference>
<dbReference type="SignaLink" id="Q14152"/>
<dbReference type="SIGNOR" id="Q14152"/>
<dbReference type="BioGRID-ORCS" id="8661">
    <property type="hits" value="833 hits in 1165 CRISPR screens"/>
</dbReference>
<dbReference type="CD-CODE" id="DEE660B4">
    <property type="entry name" value="Stress granule"/>
</dbReference>
<dbReference type="ChiTaRS" id="EIF3A">
    <property type="organism name" value="human"/>
</dbReference>
<dbReference type="EvolutionaryTrace" id="Q14152"/>
<dbReference type="GeneWiki" id="EIF3A"/>
<dbReference type="GenomeRNAi" id="8661"/>
<dbReference type="Pharos" id="Q14152">
    <property type="development level" value="Tbio"/>
</dbReference>
<dbReference type="PRO" id="PR:Q14152"/>
<dbReference type="Proteomes" id="UP000005640">
    <property type="component" value="Chromosome 10"/>
</dbReference>
<dbReference type="RNAct" id="Q14152">
    <property type="molecule type" value="protein"/>
</dbReference>
<dbReference type="Bgee" id="ENSG00000107581">
    <property type="expression patterns" value="Expressed in tendon of biceps brachii and 216 other cell types or tissues"/>
</dbReference>
<dbReference type="GO" id="GO:0005737">
    <property type="term" value="C:cytoplasm"/>
    <property type="evidence" value="ECO:0000303"/>
    <property type="project" value="UniProtKB"/>
</dbReference>
<dbReference type="GO" id="GO:0005829">
    <property type="term" value="C:cytosol"/>
    <property type="evidence" value="ECO:0000314"/>
    <property type="project" value="HPA"/>
</dbReference>
<dbReference type="GO" id="GO:0016282">
    <property type="term" value="C:eukaryotic 43S preinitiation complex"/>
    <property type="evidence" value="ECO:0007669"/>
    <property type="project" value="UniProtKB-UniRule"/>
</dbReference>
<dbReference type="GO" id="GO:0033290">
    <property type="term" value="C:eukaryotic 48S preinitiation complex"/>
    <property type="evidence" value="ECO:0007669"/>
    <property type="project" value="UniProtKB-UniRule"/>
</dbReference>
<dbReference type="GO" id="GO:0005852">
    <property type="term" value="C:eukaryotic translation initiation factor 3 complex"/>
    <property type="evidence" value="ECO:0000314"/>
    <property type="project" value="UniProtKB"/>
</dbReference>
<dbReference type="GO" id="GO:0071540">
    <property type="term" value="C:eukaryotic translation initiation factor 3 complex, eIF3e"/>
    <property type="evidence" value="ECO:0000318"/>
    <property type="project" value="GO_Central"/>
</dbReference>
<dbReference type="GO" id="GO:0071541">
    <property type="term" value="C:eukaryotic translation initiation factor 3 complex, eIF3m"/>
    <property type="evidence" value="ECO:0000318"/>
    <property type="project" value="GO_Central"/>
</dbReference>
<dbReference type="GO" id="GO:0016020">
    <property type="term" value="C:membrane"/>
    <property type="evidence" value="ECO:0007005"/>
    <property type="project" value="UniProtKB"/>
</dbReference>
<dbReference type="GO" id="GO:0005874">
    <property type="term" value="C:microtubule"/>
    <property type="evidence" value="ECO:0007669"/>
    <property type="project" value="Ensembl"/>
</dbReference>
<dbReference type="GO" id="GO:0043614">
    <property type="term" value="C:multi-eIF complex"/>
    <property type="evidence" value="ECO:0000318"/>
    <property type="project" value="GO_Central"/>
</dbReference>
<dbReference type="GO" id="GO:0005730">
    <property type="term" value="C:nucleolus"/>
    <property type="evidence" value="ECO:0000314"/>
    <property type="project" value="HPA"/>
</dbReference>
<dbReference type="GO" id="GO:0005654">
    <property type="term" value="C:nucleoplasm"/>
    <property type="evidence" value="ECO:0000314"/>
    <property type="project" value="HPA"/>
</dbReference>
<dbReference type="GO" id="GO:0014069">
    <property type="term" value="C:postsynaptic density"/>
    <property type="evidence" value="ECO:0007669"/>
    <property type="project" value="Ensembl"/>
</dbReference>
<dbReference type="GO" id="GO:0003729">
    <property type="term" value="F:mRNA binding"/>
    <property type="evidence" value="ECO:0000318"/>
    <property type="project" value="GO_Central"/>
</dbReference>
<dbReference type="GO" id="GO:0030971">
    <property type="term" value="F:receptor tyrosine kinase binding"/>
    <property type="evidence" value="ECO:0007669"/>
    <property type="project" value="Ensembl"/>
</dbReference>
<dbReference type="GO" id="GO:0003723">
    <property type="term" value="F:RNA binding"/>
    <property type="evidence" value="ECO:0000314"/>
    <property type="project" value="UniProtKB"/>
</dbReference>
<dbReference type="GO" id="GO:0005198">
    <property type="term" value="F:structural molecule activity"/>
    <property type="evidence" value="ECO:0000303"/>
    <property type="project" value="UniProtKB"/>
</dbReference>
<dbReference type="GO" id="GO:0003743">
    <property type="term" value="F:translation initiation factor activity"/>
    <property type="evidence" value="ECO:0007669"/>
    <property type="project" value="UniProtKB-UniRule"/>
</dbReference>
<dbReference type="GO" id="GO:0001732">
    <property type="term" value="P:formation of cytoplasmic translation initiation complex"/>
    <property type="evidence" value="ECO:0000314"/>
    <property type="project" value="UniProtKB"/>
</dbReference>
<dbReference type="GO" id="GO:0075522">
    <property type="term" value="P:IRES-dependent viral translational initiation"/>
    <property type="evidence" value="ECO:0000314"/>
    <property type="project" value="UniProtKB"/>
</dbReference>
<dbReference type="GO" id="GO:0070373">
    <property type="term" value="P:negative regulation of ERK1 and ERK2 cascade"/>
    <property type="evidence" value="ECO:0007669"/>
    <property type="project" value="Ensembl"/>
</dbReference>
<dbReference type="GO" id="GO:0002188">
    <property type="term" value="P:translation reinitiation"/>
    <property type="evidence" value="ECO:0000318"/>
    <property type="project" value="GO_Central"/>
</dbReference>
<dbReference type="GO" id="GO:0006413">
    <property type="term" value="P:translational initiation"/>
    <property type="evidence" value="ECO:0000305"/>
    <property type="project" value="UniProtKB"/>
</dbReference>
<dbReference type="GO" id="GO:0075525">
    <property type="term" value="P:viral translational termination-reinitiation"/>
    <property type="evidence" value="ECO:0000314"/>
    <property type="project" value="UniProtKB"/>
</dbReference>
<dbReference type="FunFam" id="1.25.40.860:FF:000001">
    <property type="entry name" value="Eukaryotic translation initiation factor 3 subunit A"/>
    <property type="match status" value="1"/>
</dbReference>
<dbReference type="FunFam" id="1.25.40.860:FF:000002">
    <property type="entry name" value="Eukaryotic translation initiation factor 3 subunit A"/>
    <property type="match status" value="1"/>
</dbReference>
<dbReference type="FunFam" id="4.10.860.10:FF:000001">
    <property type="entry name" value="Eukaryotic translation initiation factor 3 subunit A"/>
    <property type="match status" value="1"/>
</dbReference>
<dbReference type="Gene3D" id="1.25.40.860">
    <property type="match status" value="2"/>
</dbReference>
<dbReference type="Gene3D" id="4.10.860.10">
    <property type="entry name" value="UVR domain"/>
    <property type="match status" value="1"/>
</dbReference>
<dbReference type="HAMAP" id="MF_03000">
    <property type="entry name" value="eIF3a"/>
    <property type="match status" value="1"/>
</dbReference>
<dbReference type="InterPro" id="IPR027512">
    <property type="entry name" value="EIF3A"/>
</dbReference>
<dbReference type="InterPro" id="IPR054711">
    <property type="entry name" value="eIF3a_PCI_TPR-like"/>
</dbReference>
<dbReference type="InterPro" id="IPR000717">
    <property type="entry name" value="PCI_dom"/>
</dbReference>
<dbReference type="PANTHER" id="PTHR14005:SF0">
    <property type="entry name" value="EUKARYOTIC TRANSLATION INITIATION FACTOR 3 SUBUNIT A"/>
    <property type="match status" value="1"/>
</dbReference>
<dbReference type="PANTHER" id="PTHR14005">
    <property type="entry name" value="EUKARYOTIC TRANSLATION INITIATION FACTOR 3, THETA SUBUNIT"/>
    <property type="match status" value="1"/>
</dbReference>
<dbReference type="Pfam" id="PF22591">
    <property type="entry name" value="eIF3a_PCI_TPR-like"/>
    <property type="match status" value="1"/>
</dbReference>
<dbReference type="Pfam" id="PF01399">
    <property type="entry name" value="PCI"/>
    <property type="match status" value="1"/>
</dbReference>
<dbReference type="SMART" id="SM00088">
    <property type="entry name" value="PINT"/>
    <property type="match status" value="1"/>
</dbReference>
<dbReference type="PROSITE" id="PS50250">
    <property type="entry name" value="PCI"/>
    <property type="match status" value="1"/>
</dbReference>
<keyword id="KW-0002">3D-structure</keyword>
<keyword id="KW-0007">Acetylation</keyword>
<keyword id="KW-0025">Alternative splicing</keyword>
<keyword id="KW-0175">Coiled coil</keyword>
<keyword id="KW-0963">Cytoplasm</keyword>
<keyword id="KW-0903">Direct protein sequencing</keyword>
<keyword id="KW-0945">Host-virus interaction</keyword>
<keyword id="KW-0396">Initiation factor</keyword>
<keyword id="KW-0597">Phosphoprotein</keyword>
<keyword id="KW-0648">Protein biosynthesis</keyword>
<keyword id="KW-1267">Proteomics identification</keyword>
<keyword id="KW-1185">Reference proteome</keyword>
<keyword id="KW-0677">Repeat</keyword>
<keyword id="KW-0694">RNA-binding</keyword>
<proteinExistence type="evidence at protein level"/>
<name>EIF3A_HUMAN</name>
<organism>
    <name type="scientific">Homo sapiens</name>
    <name type="common">Human</name>
    <dbReference type="NCBI Taxonomy" id="9606"/>
    <lineage>
        <taxon>Eukaryota</taxon>
        <taxon>Metazoa</taxon>
        <taxon>Chordata</taxon>
        <taxon>Craniata</taxon>
        <taxon>Vertebrata</taxon>
        <taxon>Euteleostomi</taxon>
        <taxon>Mammalia</taxon>
        <taxon>Eutheria</taxon>
        <taxon>Euarchontoglires</taxon>
        <taxon>Primates</taxon>
        <taxon>Haplorrhini</taxon>
        <taxon>Catarrhini</taxon>
        <taxon>Hominidae</taxon>
        <taxon>Homo</taxon>
    </lineage>
</organism>